<organism>
    <name type="scientific">Streptococcus pneumoniae (strain ATCC 700669 / Spain 23F-1)</name>
    <dbReference type="NCBI Taxonomy" id="561276"/>
    <lineage>
        <taxon>Bacteria</taxon>
        <taxon>Bacillati</taxon>
        <taxon>Bacillota</taxon>
        <taxon>Bacilli</taxon>
        <taxon>Lactobacillales</taxon>
        <taxon>Streptococcaceae</taxon>
        <taxon>Streptococcus</taxon>
    </lineage>
</organism>
<dbReference type="EMBL" id="FM211187">
    <property type="protein sequence ID" value="CAR69257.1"/>
    <property type="molecule type" value="Genomic_DNA"/>
</dbReference>
<dbReference type="RefSeq" id="WP_000359036.1">
    <property type="nucleotide sequence ID" value="NC_011900.1"/>
</dbReference>
<dbReference type="SMR" id="B8ZLB2"/>
<dbReference type="KEGG" id="sne:SPN23F14750"/>
<dbReference type="HOGENOM" id="CLU_085114_1_2_9"/>
<dbReference type="GO" id="GO:0005886">
    <property type="term" value="C:plasma membrane"/>
    <property type="evidence" value="ECO:0007669"/>
    <property type="project" value="UniProtKB-SubCell"/>
</dbReference>
<dbReference type="GO" id="GO:0045259">
    <property type="term" value="C:proton-transporting ATP synthase complex"/>
    <property type="evidence" value="ECO:0007669"/>
    <property type="project" value="UniProtKB-KW"/>
</dbReference>
<dbReference type="GO" id="GO:0046933">
    <property type="term" value="F:proton-transporting ATP synthase activity, rotational mechanism"/>
    <property type="evidence" value="ECO:0007669"/>
    <property type="project" value="UniProtKB-UniRule"/>
</dbReference>
<dbReference type="Gene3D" id="1.10.520.20">
    <property type="entry name" value="N-terminal domain of the delta subunit of the F1F0-ATP synthase"/>
    <property type="match status" value="1"/>
</dbReference>
<dbReference type="HAMAP" id="MF_01416">
    <property type="entry name" value="ATP_synth_delta_bact"/>
    <property type="match status" value="1"/>
</dbReference>
<dbReference type="InterPro" id="IPR026015">
    <property type="entry name" value="ATP_synth_OSCP/delta_N_sf"/>
</dbReference>
<dbReference type="InterPro" id="IPR000711">
    <property type="entry name" value="ATPase_OSCP/dsu"/>
</dbReference>
<dbReference type="NCBIfam" id="TIGR01145">
    <property type="entry name" value="ATP_synt_delta"/>
    <property type="match status" value="1"/>
</dbReference>
<dbReference type="NCBIfam" id="NF004401">
    <property type="entry name" value="PRK05758.2-1"/>
    <property type="match status" value="1"/>
</dbReference>
<dbReference type="PANTHER" id="PTHR11910">
    <property type="entry name" value="ATP SYNTHASE DELTA CHAIN"/>
    <property type="match status" value="1"/>
</dbReference>
<dbReference type="Pfam" id="PF00213">
    <property type="entry name" value="OSCP"/>
    <property type="match status" value="1"/>
</dbReference>
<dbReference type="PRINTS" id="PR00125">
    <property type="entry name" value="ATPASEDELTA"/>
</dbReference>
<dbReference type="SUPFAM" id="SSF47928">
    <property type="entry name" value="N-terminal domain of the delta subunit of the F1F0-ATP synthase"/>
    <property type="match status" value="1"/>
</dbReference>
<sequence length="178" mass="20541">MDKKTVKVIEKYSMPFVQLVLEKGEEDRIFSDLTQIKQVVEKTGLPSFLKQVAVDESDKEKTIAFFQDSVSPLLQNFIQVLAYNHRANLFYDVLVDCLNRLEKETNRFEVTITSAHPLTDEQKTRLLPLIEKKMSLKVRSVKEQIDESLIGGFVIFANHKTIDVSIKQQLKVVKENLK</sequence>
<protein>
    <recommendedName>
        <fullName evidence="1">ATP synthase subunit delta</fullName>
    </recommendedName>
    <alternativeName>
        <fullName evidence="1">ATP synthase F(1) sector subunit delta</fullName>
    </alternativeName>
    <alternativeName>
        <fullName evidence="1">F-type ATPase subunit delta</fullName>
        <shortName evidence="1">F-ATPase subunit delta</shortName>
    </alternativeName>
</protein>
<accession>B8ZLB2</accession>
<reference key="1">
    <citation type="journal article" date="2009" name="J. Bacteriol.">
        <title>Role of conjugative elements in the evolution of the multidrug-resistant pandemic clone Streptococcus pneumoniae Spain23F ST81.</title>
        <authorList>
            <person name="Croucher N.J."/>
            <person name="Walker D."/>
            <person name="Romero P."/>
            <person name="Lennard N."/>
            <person name="Paterson G.K."/>
            <person name="Bason N.C."/>
            <person name="Mitchell A.M."/>
            <person name="Quail M.A."/>
            <person name="Andrew P.W."/>
            <person name="Parkhill J."/>
            <person name="Bentley S.D."/>
            <person name="Mitchell T.J."/>
        </authorList>
    </citation>
    <scope>NUCLEOTIDE SEQUENCE [LARGE SCALE GENOMIC DNA]</scope>
    <source>
        <strain>ATCC 700669 / Spain 23F-1</strain>
    </source>
</reference>
<evidence type="ECO:0000255" key="1">
    <source>
        <dbReference type="HAMAP-Rule" id="MF_01416"/>
    </source>
</evidence>
<proteinExistence type="inferred from homology"/>
<feature type="chain" id="PRO_0000371152" description="ATP synthase subunit delta">
    <location>
        <begin position="1"/>
        <end position="178"/>
    </location>
</feature>
<name>ATPD_STRPJ</name>
<keyword id="KW-0066">ATP synthesis</keyword>
<keyword id="KW-1003">Cell membrane</keyword>
<keyword id="KW-0139">CF(1)</keyword>
<keyword id="KW-0375">Hydrogen ion transport</keyword>
<keyword id="KW-0406">Ion transport</keyword>
<keyword id="KW-0472">Membrane</keyword>
<keyword id="KW-0813">Transport</keyword>
<gene>
    <name evidence="1" type="primary">atpH</name>
    <name type="ordered locus">SPN23F14750</name>
</gene>
<comment type="function">
    <text evidence="1">F(1)F(0) ATP synthase produces ATP from ADP in the presence of a proton or sodium gradient. F-type ATPases consist of two structural domains, F(1) containing the extramembraneous catalytic core and F(0) containing the membrane proton channel, linked together by a central stalk and a peripheral stalk. During catalysis, ATP synthesis in the catalytic domain of F(1) is coupled via a rotary mechanism of the central stalk subunits to proton translocation.</text>
</comment>
<comment type="function">
    <text evidence="1">This protein is part of the stalk that links CF(0) to CF(1). It either transmits conformational changes from CF(0) to CF(1) or is implicated in proton conduction.</text>
</comment>
<comment type="subunit">
    <text evidence="1">F-type ATPases have 2 components, F(1) - the catalytic core - and F(0) - the membrane proton channel. F(1) has five subunits: alpha(3), beta(3), gamma(1), delta(1), epsilon(1). F(0) has three main subunits: a(1), b(2) and c(10-14). The alpha and beta chains form an alternating ring which encloses part of the gamma chain. F(1) is attached to F(0) by a central stalk formed by the gamma and epsilon chains, while a peripheral stalk is formed by the delta and b chains.</text>
</comment>
<comment type="subcellular location">
    <subcellularLocation>
        <location evidence="1">Cell membrane</location>
        <topology evidence="1">Peripheral membrane protein</topology>
    </subcellularLocation>
</comment>
<comment type="similarity">
    <text evidence="1">Belongs to the ATPase delta chain family.</text>
</comment>